<proteinExistence type="evidence at protein level"/>
<dbReference type="EMBL" id="AK083284">
    <property type="protein sequence ID" value="BAC38843.1"/>
    <property type="molecule type" value="mRNA"/>
</dbReference>
<dbReference type="EMBL" id="AK162827">
    <property type="protein sequence ID" value="BAE37071.1"/>
    <property type="molecule type" value="mRNA"/>
</dbReference>
<dbReference type="CCDS" id="CCDS38087.1"/>
<dbReference type="RefSeq" id="NP_780636.1">
    <property type="nucleotide sequence ID" value="NM_175427.4"/>
</dbReference>
<dbReference type="SMR" id="Q8BUM6"/>
<dbReference type="FunCoup" id="Q8BUM6">
    <property type="interactions" value="4"/>
</dbReference>
<dbReference type="STRING" id="10090.ENSMUSP00000127556"/>
<dbReference type="GlyGen" id="Q8BUM6">
    <property type="glycosylation" value="1 site, 1 O-linked glycan (1 site)"/>
</dbReference>
<dbReference type="iPTMnet" id="Q8BUM6"/>
<dbReference type="PhosphoSitePlus" id="Q8BUM6"/>
<dbReference type="SwissPalm" id="Q8BUM6"/>
<dbReference type="PaxDb" id="10090-ENSMUSP00000127556"/>
<dbReference type="ProteomicsDB" id="275499"/>
<dbReference type="Antibodypedia" id="78020">
    <property type="antibodies" value="5 antibodies from 5 providers"/>
</dbReference>
<dbReference type="Ensembl" id="ENSMUST00000151224.3">
    <property type="protein sequence ID" value="ENSMUSP00000127556.2"/>
    <property type="gene ID" value="ENSMUSG00000009216.8"/>
</dbReference>
<dbReference type="GeneID" id="109349"/>
<dbReference type="KEGG" id="mmu:109349"/>
<dbReference type="UCSC" id="uc008ixc.2">
    <property type="organism name" value="mouse"/>
</dbReference>
<dbReference type="AGR" id="MGI:1926106"/>
<dbReference type="CTD" id="642968"/>
<dbReference type="MGI" id="MGI:1926106">
    <property type="gene designation" value="Fam163b"/>
</dbReference>
<dbReference type="VEuPathDB" id="HostDB:ENSMUSG00000009216"/>
<dbReference type="eggNOG" id="ENOG502RY59">
    <property type="taxonomic scope" value="Eukaryota"/>
</dbReference>
<dbReference type="GeneTree" id="ENSGT00940000159387"/>
<dbReference type="HOGENOM" id="CLU_138617_0_0_1"/>
<dbReference type="InParanoid" id="Q8BUM6"/>
<dbReference type="OMA" id="DFAVHAH"/>
<dbReference type="OrthoDB" id="9937973at2759"/>
<dbReference type="PhylomeDB" id="Q8BUM6"/>
<dbReference type="TreeFam" id="TF333084"/>
<dbReference type="BioGRID-ORCS" id="109349">
    <property type="hits" value="4 hits in 77 CRISPR screens"/>
</dbReference>
<dbReference type="PRO" id="PR:Q8BUM6"/>
<dbReference type="Proteomes" id="UP000000589">
    <property type="component" value="Chromosome 2"/>
</dbReference>
<dbReference type="RNAct" id="Q8BUM6">
    <property type="molecule type" value="protein"/>
</dbReference>
<dbReference type="Bgee" id="ENSMUSG00000009216">
    <property type="expression patterns" value="Expressed in visual cortex and 78 other cell types or tissues"/>
</dbReference>
<dbReference type="ExpressionAtlas" id="Q8BUM6">
    <property type="expression patterns" value="baseline and differential"/>
</dbReference>
<dbReference type="GO" id="GO:0016020">
    <property type="term" value="C:membrane"/>
    <property type="evidence" value="ECO:0007669"/>
    <property type="project" value="UniProtKB-SubCell"/>
</dbReference>
<dbReference type="InterPro" id="IPR029379">
    <property type="entry name" value="FAM163"/>
</dbReference>
<dbReference type="InterPro" id="IPR040280">
    <property type="entry name" value="FAM163B"/>
</dbReference>
<dbReference type="PANTHER" id="PTHR31396:SF2">
    <property type="entry name" value="PROTEIN FAM163B"/>
    <property type="match status" value="1"/>
</dbReference>
<dbReference type="PANTHER" id="PTHR31396">
    <property type="entry name" value="PROTEIN FAM163B MEMBER"/>
    <property type="match status" value="1"/>
</dbReference>
<dbReference type="Pfam" id="PF15069">
    <property type="entry name" value="FAM163"/>
    <property type="match status" value="1"/>
</dbReference>
<evidence type="ECO:0000255" key="1"/>
<evidence type="ECO:0000305" key="2"/>
<evidence type="ECO:0007744" key="3">
    <source>
    </source>
</evidence>
<organism>
    <name type="scientific">Mus musculus</name>
    <name type="common">Mouse</name>
    <dbReference type="NCBI Taxonomy" id="10090"/>
    <lineage>
        <taxon>Eukaryota</taxon>
        <taxon>Metazoa</taxon>
        <taxon>Chordata</taxon>
        <taxon>Craniata</taxon>
        <taxon>Vertebrata</taxon>
        <taxon>Euteleostomi</taxon>
        <taxon>Mammalia</taxon>
        <taxon>Eutheria</taxon>
        <taxon>Euarchontoglires</taxon>
        <taxon>Glires</taxon>
        <taxon>Rodentia</taxon>
        <taxon>Myomorpha</taxon>
        <taxon>Muroidea</taxon>
        <taxon>Muridae</taxon>
        <taxon>Murinae</taxon>
        <taxon>Mus</taxon>
        <taxon>Mus</taxon>
    </lineage>
</organism>
<sequence>MTAGTVVITGGILATVILLCIIAVLCYCRLQYYCCKKDESEEDEEEPDFAVHSHLPPLHSNRNLVLTNGPALYPAATTSFSQKSPQARALCRSCSHYEPPTFFLQEPEDEDFEGVRNGGGRVAYKSISQEDVELPSASFGGLQALNPNRLSAMREAFSRSRSVSTDV</sequence>
<comment type="subcellular location">
    <subcellularLocation>
        <location evidence="2">Membrane</location>
        <topology evidence="2">Single-pass membrane protein</topology>
    </subcellularLocation>
</comment>
<comment type="similarity">
    <text evidence="2">Belongs to the FAM163 family.</text>
</comment>
<gene>
    <name type="primary">Fam163b</name>
</gene>
<name>F163B_MOUSE</name>
<accession>Q8BUM6</accession>
<feature type="chain" id="PRO_0000280259" description="Protein FAM163B">
    <location>
        <begin position="1"/>
        <end position="167"/>
    </location>
</feature>
<feature type="transmembrane region" description="Helical" evidence="1">
    <location>
        <begin position="6"/>
        <end position="26"/>
    </location>
</feature>
<feature type="modified residue" description="Phosphoserine" evidence="3">
    <location>
        <position position="40"/>
    </location>
</feature>
<reference key="1">
    <citation type="journal article" date="2005" name="Science">
        <title>The transcriptional landscape of the mammalian genome.</title>
        <authorList>
            <person name="Carninci P."/>
            <person name="Kasukawa T."/>
            <person name="Katayama S."/>
            <person name="Gough J."/>
            <person name="Frith M.C."/>
            <person name="Maeda N."/>
            <person name="Oyama R."/>
            <person name="Ravasi T."/>
            <person name="Lenhard B."/>
            <person name="Wells C."/>
            <person name="Kodzius R."/>
            <person name="Shimokawa K."/>
            <person name="Bajic V.B."/>
            <person name="Brenner S.E."/>
            <person name="Batalov S."/>
            <person name="Forrest A.R."/>
            <person name="Zavolan M."/>
            <person name="Davis M.J."/>
            <person name="Wilming L.G."/>
            <person name="Aidinis V."/>
            <person name="Allen J.E."/>
            <person name="Ambesi-Impiombato A."/>
            <person name="Apweiler R."/>
            <person name="Aturaliya R.N."/>
            <person name="Bailey T.L."/>
            <person name="Bansal M."/>
            <person name="Baxter L."/>
            <person name="Beisel K.W."/>
            <person name="Bersano T."/>
            <person name="Bono H."/>
            <person name="Chalk A.M."/>
            <person name="Chiu K.P."/>
            <person name="Choudhary V."/>
            <person name="Christoffels A."/>
            <person name="Clutterbuck D.R."/>
            <person name="Crowe M.L."/>
            <person name="Dalla E."/>
            <person name="Dalrymple B.P."/>
            <person name="de Bono B."/>
            <person name="Della Gatta G."/>
            <person name="di Bernardo D."/>
            <person name="Down T."/>
            <person name="Engstrom P."/>
            <person name="Fagiolini M."/>
            <person name="Faulkner G."/>
            <person name="Fletcher C.F."/>
            <person name="Fukushima T."/>
            <person name="Furuno M."/>
            <person name="Futaki S."/>
            <person name="Gariboldi M."/>
            <person name="Georgii-Hemming P."/>
            <person name="Gingeras T.R."/>
            <person name="Gojobori T."/>
            <person name="Green R.E."/>
            <person name="Gustincich S."/>
            <person name="Harbers M."/>
            <person name="Hayashi Y."/>
            <person name="Hensch T.K."/>
            <person name="Hirokawa N."/>
            <person name="Hill D."/>
            <person name="Huminiecki L."/>
            <person name="Iacono M."/>
            <person name="Ikeo K."/>
            <person name="Iwama A."/>
            <person name="Ishikawa T."/>
            <person name="Jakt M."/>
            <person name="Kanapin A."/>
            <person name="Katoh M."/>
            <person name="Kawasawa Y."/>
            <person name="Kelso J."/>
            <person name="Kitamura H."/>
            <person name="Kitano H."/>
            <person name="Kollias G."/>
            <person name="Krishnan S.P."/>
            <person name="Kruger A."/>
            <person name="Kummerfeld S.K."/>
            <person name="Kurochkin I.V."/>
            <person name="Lareau L.F."/>
            <person name="Lazarevic D."/>
            <person name="Lipovich L."/>
            <person name="Liu J."/>
            <person name="Liuni S."/>
            <person name="McWilliam S."/>
            <person name="Madan Babu M."/>
            <person name="Madera M."/>
            <person name="Marchionni L."/>
            <person name="Matsuda H."/>
            <person name="Matsuzawa S."/>
            <person name="Miki H."/>
            <person name="Mignone F."/>
            <person name="Miyake S."/>
            <person name="Morris K."/>
            <person name="Mottagui-Tabar S."/>
            <person name="Mulder N."/>
            <person name="Nakano N."/>
            <person name="Nakauchi H."/>
            <person name="Ng P."/>
            <person name="Nilsson R."/>
            <person name="Nishiguchi S."/>
            <person name="Nishikawa S."/>
            <person name="Nori F."/>
            <person name="Ohara O."/>
            <person name="Okazaki Y."/>
            <person name="Orlando V."/>
            <person name="Pang K.C."/>
            <person name="Pavan W.J."/>
            <person name="Pavesi G."/>
            <person name="Pesole G."/>
            <person name="Petrovsky N."/>
            <person name="Piazza S."/>
            <person name="Reed J."/>
            <person name="Reid J.F."/>
            <person name="Ring B.Z."/>
            <person name="Ringwald M."/>
            <person name="Rost B."/>
            <person name="Ruan Y."/>
            <person name="Salzberg S.L."/>
            <person name="Sandelin A."/>
            <person name="Schneider C."/>
            <person name="Schoenbach C."/>
            <person name="Sekiguchi K."/>
            <person name="Semple C.A."/>
            <person name="Seno S."/>
            <person name="Sessa L."/>
            <person name="Sheng Y."/>
            <person name="Shibata Y."/>
            <person name="Shimada H."/>
            <person name="Shimada K."/>
            <person name="Silva D."/>
            <person name="Sinclair B."/>
            <person name="Sperling S."/>
            <person name="Stupka E."/>
            <person name="Sugiura K."/>
            <person name="Sultana R."/>
            <person name="Takenaka Y."/>
            <person name="Taki K."/>
            <person name="Tammoja K."/>
            <person name="Tan S.L."/>
            <person name="Tang S."/>
            <person name="Taylor M.S."/>
            <person name="Tegner J."/>
            <person name="Teichmann S.A."/>
            <person name="Ueda H.R."/>
            <person name="van Nimwegen E."/>
            <person name="Verardo R."/>
            <person name="Wei C.L."/>
            <person name="Yagi K."/>
            <person name="Yamanishi H."/>
            <person name="Zabarovsky E."/>
            <person name="Zhu S."/>
            <person name="Zimmer A."/>
            <person name="Hide W."/>
            <person name="Bult C."/>
            <person name="Grimmond S.M."/>
            <person name="Teasdale R.D."/>
            <person name="Liu E.T."/>
            <person name="Brusic V."/>
            <person name="Quackenbush J."/>
            <person name="Wahlestedt C."/>
            <person name="Mattick J.S."/>
            <person name="Hume D.A."/>
            <person name="Kai C."/>
            <person name="Sasaki D."/>
            <person name="Tomaru Y."/>
            <person name="Fukuda S."/>
            <person name="Kanamori-Katayama M."/>
            <person name="Suzuki M."/>
            <person name="Aoki J."/>
            <person name="Arakawa T."/>
            <person name="Iida J."/>
            <person name="Imamura K."/>
            <person name="Itoh M."/>
            <person name="Kato T."/>
            <person name="Kawaji H."/>
            <person name="Kawagashira N."/>
            <person name="Kawashima T."/>
            <person name="Kojima M."/>
            <person name="Kondo S."/>
            <person name="Konno H."/>
            <person name="Nakano K."/>
            <person name="Ninomiya N."/>
            <person name="Nishio T."/>
            <person name="Okada M."/>
            <person name="Plessy C."/>
            <person name="Shibata K."/>
            <person name="Shiraki T."/>
            <person name="Suzuki S."/>
            <person name="Tagami M."/>
            <person name="Waki K."/>
            <person name="Watahiki A."/>
            <person name="Okamura-Oho Y."/>
            <person name="Suzuki H."/>
            <person name="Kawai J."/>
            <person name="Hayashizaki Y."/>
        </authorList>
    </citation>
    <scope>NUCLEOTIDE SEQUENCE [LARGE SCALE MRNA]</scope>
    <source>
        <strain>C57BL/6J</strain>
        <tissue>Hippocampus</tissue>
        <tissue>Hypothalamus</tissue>
    </source>
</reference>
<reference key="2">
    <citation type="journal article" date="2010" name="Cell">
        <title>A tissue-specific atlas of mouse protein phosphorylation and expression.</title>
        <authorList>
            <person name="Huttlin E.L."/>
            <person name="Jedrychowski M.P."/>
            <person name="Elias J.E."/>
            <person name="Goswami T."/>
            <person name="Rad R."/>
            <person name="Beausoleil S.A."/>
            <person name="Villen J."/>
            <person name="Haas W."/>
            <person name="Sowa M.E."/>
            <person name="Gygi S.P."/>
        </authorList>
    </citation>
    <scope>PHOSPHORYLATION [LARGE SCALE ANALYSIS] AT SER-40</scope>
    <scope>IDENTIFICATION BY MASS SPECTROMETRY [LARGE SCALE ANALYSIS]</scope>
    <source>
        <tissue>Brain</tissue>
    </source>
</reference>
<protein>
    <recommendedName>
        <fullName>Protein FAM163B</fullName>
    </recommendedName>
</protein>
<keyword id="KW-0472">Membrane</keyword>
<keyword id="KW-0597">Phosphoprotein</keyword>
<keyword id="KW-1185">Reference proteome</keyword>
<keyword id="KW-0812">Transmembrane</keyword>
<keyword id="KW-1133">Transmembrane helix</keyword>